<organism>
    <name type="scientific">Arabidopsis thaliana</name>
    <name type="common">Mouse-ear cress</name>
    <dbReference type="NCBI Taxonomy" id="3702"/>
    <lineage>
        <taxon>Eukaryota</taxon>
        <taxon>Viridiplantae</taxon>
        <taxon>Streptophyta</taxon>
        <taxon>Embryophyta</taxon>
        <taxon>Tracheophyta</taxon>
        <taxon>Spermatophyta</taxon>
        <taxon>Magnoliopsida</taxon>
        <taxon>eudicotyledons</taxon>
        <taxon>Gunneridae</taxon>
        <taxon>Pentapetalae</taxon>
        <taxon>rosids</taxon>
        <taxon>malvids</taxon>
        <taxon>Brassicales</taxon>
        <taxon>Brassicaceae</taxon>
        <taxon>Camelineae</taxon>
        <taxon>Arabidopsis</taxon>
    </lineage>
</organism>
<evidence type="ECO:0000250" key="1">
    <source>
        <dbReference type="UniProtKB" id="P42697"/>
    </source>
</evidence>
<evidence type="ECO:0000255" key="2">
    <source>
        <dbReference type="PROSITE-ProRule" id="PRU00720"/>
    </source>
</evidence>
<evidence type="ECO:0000255" key="3">
    <source>
        <dbReference type="PROSITE-ProRule" id="PRU01055"/>
    </source>
</evidence>
<evidence type="ECO:0000269" key="4">
    <source>
    </source>
</evidence>
<evidence type="ECO:0000269" key="5">
    <source>
    </source>
</evidence>
<evidence type="ECO:0000269" key="6">
    <source>
    </source>
</evidence>
<evidence type="ECO:0000269" key="7">
    <source>
    </source>
</evidence>
<evidence type="ECO:0000303" key="8">
    <source>
    </source>
</evidence>
<evidence type="ECO:0000303" key="9">
    <source>
    </source>
</evidence>
<evidence type="ECO:0000303" key="10">
    <source>
    </source>
</evidence>
<evidence type="ECO:0000303" key="11">
    <source>
    </source>
</evidence>
<evidence type="ECO:0000303" key="12">
    <source>
    </source>
</evidence>
<evidence type="ECO:0000305" key="13"/>
<evidence type="ECO:0000312" key="14">
    <source>
        <dbReference type="Araport" id="AT3G60190"/>
    </source>
</evidence>
<evidence type="ECO:0000312" key="15">
    <source>
        <dbReference type="EMBL" id="CAB75934.1"/>
    </source>
</evidence>
<evidence type="ECO:0007744" key="16">
    <source>
    </source>
</evidence>
<proteinExistence type="evidence at protein level"/>
<sequence length="624" mass="69804">MTTMESLIGLVNRIQRACTVLGDYGGGTGSNAFNSLWEALPTVAVVGGQSSGKSSVLESIVGRDFLPRGSGIVTRRPLVLQLHKTDDGTEEYAEFLHLPKKQFTDFALVRREIQDETDRITGKNKQISPVPIHLSIYSPNVVNLTLIDLPGLTKVAVEGQPETIAEDIESMVRTYVDKPNCIILAISPANQDIATSDAIKLAKDVDPTGERTFGVLTKLDLMDKGTNALEVLEGRSYRLQHPWVGIVNRSQADINKNVDMMLARRKEREYFDTSPDYGHLASKMGSEYLAKLLSKHLESVIRTRIPSILSLINKSIEELERELDRMGRPVAVDAGAQLYTILEMCRAFDKIFKEHLDGGRPGGDRIYGVFDNQLPAALKKLPFDRHLSLQSVKKIVSEADGYQPHLIAPEQGYRRLIEGALGYFRGPAEASVDAVHYVLKELVRKSISETEELKRFPSLQVELAAAANSSLEKFREESKKSVIRLVDMESAYLTAEFFRKLPQEIERPVTNSKNQTASPSSATLDQYGDGHFRRIASNVSAYVNMVSDTLRNTIPKACVYCQVRQAKLALLNYFYSQISKREGKQLGQLLDEDPALMDRRLECAKRLELYKKARDEIDAVAWVR</sequence>
<reference key="1">
    <citation type="journal article" date="2001" name="Plant Physiol.">
        <title>The Arabidopsis cell plate-associated dynamin-like protein, ADL1Ap, is required for multiple stages of plant growth and development.</title>
        <authorList>
            <person name="Kang B.-H."/>
            <person name="Busse J.S."/>
            <person name="Dickey C."/>
            <person name="Rancour D.M."/>
            <person name="Bednarek S.Y."/>
        </authorList>
    </citation>
    <scope>NUCLEOTIDE SEQUENCE [MRNA]</scope>
</reference>
<reference key="2">
    <citation type="submission" date="2000-01" db="EMBL/GenBank/DDBJ databases">
        <title>Presence of multiple isoforms of dynamin-like proteins in Arabidopsis and their differential expression.</title>
        <authorList>
            <person name="Kang Y.N."/>
            <person name="Kim S.H."/>
            <person name="Hwang I."/>
        </authorList>
    </citation>
    <scope>NUCLEOTIDE SEQUENCE [MRNA]</scope>
</reference>
<reference key="3">
    <citation type="submission" date="2000-12" db="EMBL/GenBank/DDBJ databases">
        <title>Identification of a subgroup of closely related dynamin-like proteins in Arabidopsis thaliana.</title>
        <authorList>
            <person name="Jasper F."/>
            <person name="Menzel D."/>
        </authorList>
    </citation>
    <scope>NUCLEOTIDE SEQUENCE [MRNA]</scope>
    <source>
        <strain>cv. Columbia</strain>
    </source>
</reference>
<reference key="4">
    <citation type="journal article" date="2000" name="Nature">
        <title>Sequence and analysis of chromosome 3 of the plant Arabidopsis thaliana.</title>
        <authorList>
            <person name="Salanoubat M."/>
            <person name="Lemcke K."/>
            <person name="Rieger M."/>
            <person name="Ansorge W."/>
            <person name="Unseld M."/>
            <person name="Fartmann B."/>
            <person name="Valle G."/>
            <person name="Bloecker H."/>
            <person name="Perez-Alonso M."/>
            <person name="Obermaier B."/>
            <person name="Delseny M."/>
            <person name="Boutry M."/>
            <person name="Grivell L.A."/>
            <person name="Mache R."/>
            <person name="Puigdomenech P."/>
            <person name="De Simone V."/>
            <person name="Choisne N."/>
            <person name="Artiguenave F."/>
            <person name="Robert C."/>
            <person name="Brottier P."/>
            <person name="Wincker P."/>
            <person name="Cattolico L."/>
            <person name="Weissenbach J."/>
            <person name="Saurin W."/>
            <person name="Quetier F."/>
            <person name="Schaefer M."/>
            <person name="Mueller-Auer S."/>
            <person name="Gabel C."/>
            <person name="Fuchs M."/>
            <person name="Benes V."/>
            <person name="Wurmbach E."/>
            <person name="Drzonek H."/>
            <person name="Erfle H."/>
            <person name="Jordan N."/>
            <person name="Bangert S."/>
            <person name="Wiedelmann R."/>
            <person name="Kranz H."/>
            <person name="Voss H."/>
            <person name="Holland R."/>
            <person name="Brandt P."/>
            <person name="Nyakatura G."/>
            <person name="Vezzi A."/>
            <person name="D'Angelo M."/>
            <person name="Pallavicini A."/>
            <person name="Toppo S."/>
            <person name="Simionati B."/>
            <person name="Conrad A."/>
            <person name="Hornischer K."/>
            <person name="Kauer G."/>
            <person name="Loehnert T.-H."/>
            <person name="Nordsiek G."/>
            <person name="Reichelt J."/>
            <person name="Scharfe M."/>
            <person name="Schoen O."/>
            <person name="Bargues M."/>
            <person name="Terol J."/>
            <person name="Climent J."/>
            <person name="Navarro P."/>
            <person name="Collado C."/>
            <person name="Perez-Perez A."/>
            <person name="Ottenwaelder B."/>
            <person name="Duchemin D."/>
            <person name="Cooke R."/>
            <person name="Laudie M."/>
            <person name="Berger-Llauro C."/>
            <person name="Purnelle B."/>
            <person name="Masuy D."/>
            <person name="de Haan M."/>
            <person name="Maarse A.C."/>
            <person name="Alcaraz J.-P."/>
            <person name="Cottet A."/>
            <person name="Casacuberta E."/>
            <person name="Monfort A."/>
            <person name="Argiriou A."/>
            <person name="Flores M."/>
            <person name="Liguori R."/>
            <person name="Vitale D."/>
            <person name="Mannhaupt G."/>
            <person name="Haase D."/>
            <person name="Schoof H."/>
            <person name="Rudd S."/>
            <person name="Zaccaria P."/>
            <person name="Mewes H.-W."/>
            <person name="Mayer K.F.X."/>
            <person name="Kaul S."/>
            <person name="Town C.D."/>
            <person name="Koo H.L."/>
            <person name="Tallon L.J."/>
            <person name="Jenkins J."/>
            <person name="Rooney T."/>
            <person name="Rizzo M."/>
            <person name="Walts A."/>
            <person name="Utterback T."/>
            <person name="Fujii C.Y."/>
            <person name="Shea T.P."/>
            <person name="Creasy T.H."/>
            <person name="Haas B."/>
            <person name="Maiti R."/>
            <person name="Wu D."/>
            <person name="Peterson J."/>
            <person name="Van Aken S."/>
            <person name="Pai G."/>
            <person name="Militscher J."/>
            <person name="Sellers P."/>
            <person name="Gill J.E."/>
            <person name="Feldblyum T.V."/>
            <person name="Preuss D."/>
            <person name="Lin X."/>
            <person name="Nierman W.C."/>
            <person name="Salzberg S.L."/>
            <person name="White O."/>
            <person name="Venter J.C."/>
            <person name="Fraser C.M."/>
            <person name="Kaneko T."/>
            <person name="Nakamura Y."/>
            <person name="Sato S."/>
            <person name="Kato T."/>
            <person name="Asamizu E."/>
            <person name="Sasamoto S."/>
            <person name="Kimura T."/>
            <person name="Idesawa K."/>
            <person name="Kawashima K."/>
            <person name="Kishida Y."/>
            <person name="Kiyokawa C."/>
            <person name="Kohara M."/>
            <person name="Matsumoto M."/>
            <person name="Matsuno A."/>
            <person name="Muraki A."/>
            <person name="Nakayama S."/>
            <person name="Nakazaki N."/>
            <person name="Shinpo S."/>
            <person name="Takeuchi C."/>
            <person name="Wada T."/>
            <person name="Watanabe A."/>
            <person name="Yamada M."/>
            <person name="Yasuda M."/>
            <person name="Tabata S."/>
        </authorList>
    </citation>
    <scope>NUCLEOTIDE SEQUENCE [LARGE SCALE GENOMIC DNA]</scope>
    <source>
        <strain>cv. Columbia</strain>
    </source>
</reference>
<reference key="5">
    <citation type="journal article" date="2017" name="Plant J.">
        <title>Araport11: a complete reannotation of the Arabidopsis thaliana reference genome.</title>
        <authorList>
            <person name="Cheng C.Y."/>
            <person name="Krishnakumar V."/>
            <person name="Chan A.P."/>
            <person name="Thibaud-Nissen F."/>
            <person name="Schobel S."/>
            <person name="Town C.D."/>
        </authorList>
    </citation>
    <scope>GENOME REANNOTATION</scope>
    <source>
        <strain>cv. Columbia</strain>
    </source>
</reference>
<reference key="6">
    <citation type="journal article" date="2003" name="Science">
        <title>Empirical analysis of transcriptional activity in the Arabidopsis genome.</title>
        <authorList>
            <person name="Yamada K."/>
            <person name="Lim J."/>
            <person name="Dale J.M."/>
            <person name="Chen H."/>
            <person name="Shinn P."/>
            <person name="Palm C.J."/>
            <person name="Southwick A.M."/>
            <person name="Wu H.C."/>
            <person name="Kim C.J."/>
            <person name="Nguyen M."/>
            <person name="Pham P.K."/>
            <person name="Cheuk R.F."/>
            <person name="Karlin-Newmann G."/>
            <person name="Liu S.X."/>
            <person name="Lam B."/>
            <person name="Sakano H."/>
            <person name="Wu T."/>
            <person name="Yu G."/>
            <person name="Miranda M."/>
            <person name="Quach H.L."/>
            <person name="Tripp M."/>
            <person name="Chang C.H."/>
            <person name="Lee J.M."/>
            <person name="Toriumi M.J."/>
            <person name="Chan M.M."/>
            <person name="Tang C.C."/>
            <person name="Onodera C.S."/>
            <person name="Deng J.M."/>
            <person name="Akiyama K."/>
            <person name="Ansari Y."/>
            <person name="Arakawa T."/>
            <person name="Banh J."/>
            <person name="Banno F."/>
            <person name="Bowser L."/>
            <person name="Brooks S.Y."/>
            <person name="Carninci P."/>
            <person name="Chao Q."/>
            <person name="Choy N."/>
            <person name="Enju A."/>
            <person name="Goldsmith A.D."/>
            <person name="Gurjal M."/>
            <person name="Hansen N.F."/>
            <person name="Hayashizaki Y."/>
            <person name="Johnson-Hopson C."/>
            <person name="Hsuan V.W."/>
            <person name="Iida K."/>
            <person name="Karnes M."/>
            <person name="Khan S."/>
            <person name="Koesema E."/>
            <person name="Ishida J."/>
            <person name="Jiang P.X."/>
            <person name="Jones T."/>
            <person name="Kawai J."/>
            <person name="Kamiya A."/>
            <person name="Meyers C."/>
            <person name="Nakajima M."/>
            <person name="Narusaka M."/>
            <person name="Seki M."/>
            <person name="Sakurai T."/>
            <person name="Satou M."/>
            <person name="Tamse R."/>
            <person name="Vaysberg M."/>
            <person name="Wallender E.K."/>
            <person name="Wong C."/>
            <person name="Yamamura Y."/>
            <person name="Yuan S."/>
            <person name="Shinozaki K."/>
            <person name="Davis R.W."/>
            <person name="Theologis A."/>
            <person name="Ecker J.R."/>
        </authorList>
    </citation>
    <scope>NUCLEOTIDE SEQUENCE [LARGE SCALE MRNA]</scope>
    <source>
        <strain>cv. Columbia</strain>
    </source>
</reference>
<reference key="7">
    <citation type="journal article" date="2003" name="Plant Cell">
        <title>Members of the Arabidopsis dynamin-like gene family, ADL1, are essential for plant cytokinesis and polarized cell growth.</title>
        <authorList>
            <person name="Kang B.-H."/>
            <person name="Busse J.S."/>
            <person name="Bednarek S.Y."/>
        </authorList>
    </citation>
    <scope>FUNCTION</scope>
    <scope>SUBCELLULAR LOCATION</scope>
</reference>
<reference key="8">
    <citation type="journal article" date="2003" name="Plant J.">
        <title>The dynamin-like protein ADL1C is essential for plasma membrane maintenance during pollen maturation.</title>
        <authorList>
            <person name="Kang B.-H."/>
            <person name="Rancour D.M."/>
            <person name="Bednarek S.Y."/>
        </authorList>
    </citation>
    <scope>TISSUE SPECIFICITY</scope>
</reference>
<reference key="9">
    <citation type="journal article" date="2003" name="Plant Mol. Biol.">
        <title>A unified nomenclature for Arabidopsis dynamin-related large GTPases based on homology and possible functions.</title>
        <authorList>
            <person name="Hong Z."/>
            <person name="Bednarek S.Y."/>
            <person name="Blumwald E."/>
            <person name="Hwang I."/>
            <person name="Jurgens G."/>
            <person name="Menzel D."/>
            <person name="Osteryoung K.W."/>
            <person name="Raikhel N.V."/>
            <person name="Shinozaki K."/>
            <person name="Tsutsumi N."/>
            <person name="Verma D.P.S."/>
        </authorList>
    </citation>
    <scope>GENE FAMILY</scope>
    <scope>NOMENCLATURE</scope>
</reference>
<reference key="10">
    <citation type="journal article" date="2003" name="Plant Mol. Biol.">
        <title>Phragmoplastin dynamics: multiple forms, microtubule association and their roles in cell plate formation in plants.</title>
        <authorList>
            <person name="Hong Z."/>
            <person name="Geisler-Lee C.J."/>
            <person name="Zhang Z."/>
            <person name="Verma D.P.S."/>
        </authorList>
    </citation>
    <scope>FUNCTION</scope>
    <scope>SUBUNIT</scope>
    <scope>SUBCELLULAR LOCATION</scope>
</reference>
<reference key="11">
    <citation type="journal article" date="2008" name="Plant Physiol.">
        <title>A novel RNA-binding protein associated with cell plate formation.</title>
        <authorList>
            <person name="Ma L."/>
            <person name="Xie B."/>
            <person name="Hong Z."/>
            <person name="Verma D.P.S."/>
            <person name="Zhang Z."/>
        </authorList>
    </citation>
    <scope>INTERACTION WITH PHIP1</scope>
</reference>
<reference key="12">
    <citation type="journal article" date="2012" name="Mol. Cell. Proteomics">
        <title>Comparative large-scale characterisation of plant vs. mammal proteins reveals similar and idiosyncratic N-alpha acetylation features.</title>
        <authorList>
            <person name="Bienvenut W.V."/>
            <person name="Sumpton D."/>
            <person name="Martinez A."/>
            <person name="Lilla S."/>
            <person name="Espagne C."/>
            <person name="Meinnel T."/>
            <person name="Giglione C."/>
        </authorList>
    </citation>
    <scope>ACETYLATION [LARGE SCALE ANALYSIS] AT THR-2</scope>
    <scope>CLEAVAGE OF INITIATOR METHIONINE [LARGE SCALE ANALYSIS]</scope>
    <scope>IDENTIFICATION BY MASS SPECTROMETRY [LARGE SCALE ANALYSIS]</scope>
</reference>
<name>DRP1E_ARATH</name>
<keyword id="KW-0007">Acetylation</keyword>
<keyword id="KW-0131">Cell cycle</keyword>
<keyword id="KW-0132">Cell division</keyword>
<keyword id="KW-0963">Cytoplasm</keyword>
<keyword id="KW-0206">Cytoskeleton</keyword>
<keyword id="KW-0342">GTP-binding</keyword>
<keyword id="KW-0378">Hydrolase</keyword>
<keyword id="KW-0493">Microtubule</keyword>
<keyword id="KW-0505">Motor protein</keyword>
<keyword id="KW-0547">Nucleotide-binding</keyword>
<keyword id="KW-1185">Reference proteome</keyword>
<dbReference type="EC" id="3.6.5.-" evidence="1"/>
<dbReference type="EMBL" id="AF488725">
    <property type="protein sequence ID" value="AAL88715.1"/>
    <property type="status" value="ALT_INIT"/>
    <property type="molecule type" value="mRNA"/>
</dbReference>
<dbReference type="EMBL" id="AF180733">
    <property type="protein sequence ID" value="AAF22292.1"/>
    <property type="status" value="ALT_FRAME"/>
    <property type="molecule type" value="mRNA"/>
</dbReference>
<dbReference type="EMBL" id="AJ304842">
    <property type="protein sequence ID" value="CAC19657.1"/>
    <property type="molecule type" value="mRNA"/>
</dbReference>
<dbReference type="EMBL" id="AL138658">
    <property type="protein sequence ID" value="CAB75934.1"/>
    <property type="status" value="ALT_INIT"/>
    <property type="molecule type" value="Genomic_DNA"/>
</dbReference>
<dbReference type="EMBL" id="CP002686">
    <property type="protein sequence ID" value="AEE80022.1"/>
    <property type="molecule type" value="Genomic_DNA"/>
</dbReference>
<dbReference type="EMBL" id="AF428332">
    <property type="protein sequence ID" value="AAL16262.1"/>
    <property type="molecule type" value="mRNA"/>
</dbReference>
<dbReference type="PIR" id="T47843">
    <property type="entry name" value="T47843"/>
</dbReference>
<dbReference type="RefSeq" id="NP_567094.1">
    <property type="nucleotide sequence ID" value="NM_115882.4"/>
</dbReference>
<dbReference type="SMR" id="Q9FNX5"/>
<dbReference type="BioGRID" id="10503">
    <property type="interactions" value="5"/>
</dbReference>
<dbReference type="FunCoup" id="Q9FNX5">
    <property type="interactions" value="1015"/>
</dbReference>
<dbReference type="IntAct" id="Q9FNX5">
    <property type="interactions" value="3"/>
</dbReference>
<dbReference type="STRING" id="3702.Q9FNX5"/>
<dbReference type="iPTMnet" id="Q9FNX5"/>
<dbReference type="PaxDb" id="3702-AT3G60190.1"/>
<dbReference type="ProteomicsDB" id="224363"/>
<dbReference type="EnsemblPlants" id="AT3G60190.1">
    <property type="protein sequence ID" value="AT3G60190.1"/>
    <property type="gene ID" value="AT3G60190"/>
</dbReference>
<dbReference type="GeneID" id="825189"/>
<dbReference type="Gramene" id="AT3G60190.1">
    <property type="protein sequence ID" value="AT3G60190.1"/>
    <property type="gene ID" value="AT3G60190"/>
</dbReference>
<dbReference type="KEGG" id="ath:AT3G60190"/>
<dbReference type="Araport" id="AT3G60190"/>
<dbReference type="TAIR" id="AT3G60190">
    <property type="gene designation" value="DL1E"/>
</dbReference>
<dbReference type="eggNOG" id="KOG0446">
    <property type="taxonomic scope" value="Eukaryota"/>
</dbReference>
<dbReference type="HOGENOM" id="CLU_008964_5_3_1"/>
<dbReference type="InParanoid" id="Q9FNX5"/>
<dbReference type="OMA" id="VEKPNCV"/>
<dbReference type="PhylomeDB" id="Q9FNX5"/>
<dbReference type="PRO" id="PR:Q9FNX5"/>
<dbReference type="Proteomes" id="UP000006548">
    <property type="component" value="Chromosome 3"/>
</dbReference>
<dbReference type="ExpressionAtlas" id="Q9FNX5">
    <property type="expression patterns" value="baseline and differential"/>
</dbReference>
<dbReference type="GO" id="GO:0005829">
    <property type="term" value="C:cytosol"/>
    <property type="evidence" value="ECO:0007005"/>
    <property type="project" value="TAIR"/>
</dbReference>
<dbReference type="GO" id="GO:0005874">
    <property type="term" value="C:microtubule"/>
    <property type="evidence" value="ECO:0007669"/>
    <property type="project" value="UniProtKB-KW"/>
</dbReference>
<dbReference type="GO" id="GO:0005739">
    <property type="term" value="C:mitochondrion"/>
    <property type="evidence" value="ECO:0000314"/>
    <property type="project" value="TAIR"/>
</dbReference>
<dbReference type="GO" id="GO:0009524">
    <property type="term" value="C:phragmoplast"/>
    <property type="evidence" value="ECO:0007669"/>
    <property type="project" value="UniProtKB-SubCell"/>
</dbReference>
<dbReference type="GO" id="GO:0000325">
    <property type="term" value="C:plant-type vacuole"/>
    <property type="evidence" value="ECO:0007005"/>
    <property type="project" value="TAIR"/>
</dbReference>
<dbReference type="GO" id="GO:0005886">
    <property type="term" value="C:plasma membrane"/>
    <property type="evidence" value="ECO:0007005"/>
    <property type="project" value="TAIR"/>
</dbReference>
<dbReference type="GO" id="GO:0009506">
    <property type="term" value="C:plasmodesma"/>
    <property type="evidence" value="ECO:0007005"/>
    <property type="project" value="TAIR"/>
</dbReference>
<dbReference type="GO" id="GO:0005525">
    <property type="term" value="F:GTP binding"/>
    <property type="evidence" value="ECO:0007669"/>
    <property type="project" value="UniProtKB-KW"/>
</dbReference>
<dbReference type="GO" id="GO:0003924">
    <property type="term" value="F:GTPase activity"/>
    <property type="evidence" value="ECO:0007669"/>
    <property type="project" value="InterPro"/>
</dbReference>
<dbReference type="GO" id="GO:0051301">
    <property type="term" value="P:cell division"/>
    <property type="evidence" value="ECO:0007669"/>
    <property type="project" value="UniProtKB-KW"/>
</dbReference>
<dbReference type="GO" id="GO:0050832">
    <property type="term" value="P:defense response to fungus"/>
    <property type="evidence" value="ECO:0000315"/>
    <property type="project" value="TAIR"/>
</dbReference>
<dbReference type="GO" id="GO:0016192">
    <property type="term" value="P:vesicle-mediated transport"/>
    <property type="evidence" value="ECO:0000250"/>
    <property type="project" value="TAIR"/>
</dbReference>
<dbReference type="CDD" id="cd08771">
    <property type="entry name" value="DLP_1"/>
    <property type="match status" value="1"/>
</dbReference>
<dbReference type="FunFam" id="1.20.120.1240:FF:000009">
    <property type="entry name" value="Dynamin-related protein 1C"/>
    <property type="match status" value="1"/>
</dbReference>
<dbReference type="FunFam" id="3.40.50.300:FF:000228">
    <property type="entry name" value="dynamin-related protein 1E"/>
    <property type="match status" value="1"/>
</dbReference>
<dbReference type="Gene3D" id="1.20.120.1240">
    <property type="entry name" value="Dynamin, middle domain"/>
    <property type="match status" value="1"/>
</dbReference>
<dbReference type="Gene3D" id="3.40.50.300">
    <property type="entry name" value="P-loop containing nucleotide triphosphate hydrolases"/>
    <property type="match status" value="1"/>
</dbReference>
<dbReference type="InterPro" id="IPR022812">
    <property type="entry name" value="Dynamin"/>
</dbReference>
<dbReference type="InterPro" id="IPR001401">
    <property type="entry name" value="Dynamin_GTPase"/>
</dbReference>
<dbReference type="InterPro" id="IPR019762">
    <property type="entry name" value="Dynamin_GTPase_CS"/>
</dbReference>
<dbReference type="InterPro" id="IPR045063">
    <property type="entry name" value="Dynamin_N"/>
</dbReference>
<dbReference type="InterPro" id="IPR000375">
    <property type="entry name" value="Dynamin_stalk"/>
</dbReference>
<dbReference type="InterPro" id="IPR030381">
    <property type="entry name" value="G_DYNAMIN_dom"/>
</dbReference>
<dbReference type="InterPro" id="IPR003130">
    <property type="entry name" value="GED"/>
</dbReference>
<dbReference type="InterPro" id="IPR020850">
    <property type="entry name" value="GED_dom"/>
</dbReference>
<dbReference type="InterPro" id="IPR027417">
    <property type="entry name" value="P-loop_NTPase"/>
</dbReference>
<dbReference type="PANTHER" id="PTHR11566">
    <property type="entry name" value="DYNAMIN"/>
    <property type="match status" value="1"/>
</dbReference>
<dbReference type="PANTHER" id="PTHR11566:SF151">
    <property type="entry name" value="PHRAGMOPLASTIN DRP1E"/>
    <property type="match status" value="1"/>
</dbReference>
<dbReference type="Pfam" id="PF01031">
    <property type="entry name" value="Dynamin_M"/>
    <property type="match status" value="1"/>
</dbReference>
<dbReference type="Pfam" id="PF00350">
    <property type="entry name" value="Dynamin_N"/>
    <property type="match status" value="1"/>
</dbReference>
<dbReference type="Pfam" id="PF02212">
    <property type="entry name" value="GED"/>
    <property type="match status" value="1"/>
</dbReference>
<dbReference type="PRINTS" id="PR00195">
    <property type="entry name" value="DYNAMIN"/>
</dbReference>
<dbReference type="SMART" id="SM00053">
    <property type="entry name" value="DYNc"/>
    <property type="match status" value="1"/>
</dbReference>
<dbReference type="SMART" id="SM00302">
    <property type="entry name" value="GED"/>
    <property type="match status" value="1"/>
</dbReference>
<dbReference type="SUPFAM" id="SSF52540">
    <property type="entry name" value="P-loop containing nucleoside triphosphate hydrolases"/>
    <property type="match status" value="1"/>
</dbReference>
<dbReference type="PROSITE" id="PS00410">
    <property type="entry name" value="G_DYNAMIN_1"/>
    <property type="match status" value="1"/>
</dbReference>
<dbReference type="PROSITE" id="PS51718">
    <property type="entry name" value="G_DYNAMIN_2"/>
    <property type="match status" value="1"/>
</dbReference>
<dbReference type="PROSITE" id="PS51388">
    <property type="entry name" value="GED"/>
    <property type="match status" value="1"/>
</dbReference>
<feature type="initiator methionine" description="Removed" evidence="16">
    <location>
        <position position="1"/>
    </location>
</feature>
<feature type="chain" id="PRO_0000206581" description="Phragmoplastin DRP1E">
    <location>
        <begin position="2"/>
        <end position="624"/>
    </location>
</feature>
<feature type="domain" description="Dynamin-type G" evidence="3">
    <location>
        <begin position="37"/>
        <end position="306"/>
    </location>
</feature>
<feature type="domain" description="GED" evidence="2">
    <location>
        <begin position="532"/>
        <end position="624"/>
    </location>
</feature>
<feature type="region of interest" description="G1 motif" evidence="3">
    <location>
        <begin position="47"/>
        <end position="54"/>
    </location>
</feature>
<feature type="region of interest" description="G2 motif" evidence="3">
    <location>
        <begin position="73"/>
        <end position="75"/>
    </location>
</feature>
<feature type="region of interest" description="G3 motif" evidence="3">
    <location>
        <begin position="148"/>
        <end position="151"/>
    </location>
</feature>
<feature type="region of interest" description="G4 motif" evidence="3">
    <location>
        <begin position="217"/>
        <end position="220"/>
    </location>
</feature>
<feature type="region of interest" description="G5 motif" evidence="3">
    <location>
        <begin position="247"/>
        <end position="250"/>
    </location>
</feature>
<feature type="binding site" evidence="1">
    <location>
        <begin position="50"/>
        <end position="55"/>
    </location>
    <ligand>
        <name>GTP</name>
        <dbReference type="ChEBI" id="CHEBI:37565"/>
    </ligand>
</feature>
<feature type="binding site" evidence="1">
    <location>
        <begin position="218"/>
        <end position="223"/>
    </location>
    <ligand>
        <name>GTP</name>
        <dbReference type="ChEBI" id="CHEBI:37565"/>
    </ligand>
</feature>
<feature type="binding site" evidence="1">
    <location>
        <begin position="248"/>
        <end position="251"/>
    </location>
    <ligand>
        <name>GTP</name>
        <dbReference type="ChEBI" id="CHEBI:37565"/>
    </ligand>
</feature>
<feature type="modified residue" description="N-acetylthreonine" evidence="16">
    <location>
        <position position="2"/>
    </location>
</feature>
<feature type="sequence conflict" description="In Ref. 2; AAF22292." evidence="13" ref="2">
    <original>PH</original>
    <variation>LT</variation>
    <location>
        <begin position="404"/>
        <end position="405"/>
    </location>
</feature>
<feature type="sequence conflict" description="In Ref. 2; AAF22292." evidence="13" ref="2">
    <original>P</original>
    <variation>L</variation>
    <location>
        <position position="519"/>
    </location>
</feature>
<protein>
    <recommendedName>
        <fullName evidence="13">Phragmoplastin DRP1E</fullName>
        <ecNumber evidence="1">3.6.5.-</ecNumber>
    </recommendedName>
    <alternativeName>
        <fullName evidence="8 10 11">Dynamin-like protein 1E</fullName>
    </alternativeName>
    <alternativeName>
        <fullName evidence="9 11">Dynamin-like protein 4</fullName>
    </alternativeName>
    <alternativeName>
        <fullName evidence="11">Dynamin-like protein DLP2</fullName>
    </alternativeName>
    <alternativeName>
        <fullName evidence="11 12">Dynamin-related protein 1E</fullName>
        <shortName evidence="11 12">AtDRP1E</shortName>
    </alternativeName>
</protein>
<gene>
    <name evidence="11 12" type="primary">DRP1E</name>
    <name evidence="8 10 11" type="synonym">ADL1E</name>
    <name evidence="9 11" type="synonym">ADL4</name>
    <name evidence="11" type="synonym">DLP2</name>
    <name evidence="14" type="ordered locus">At3g60190</name>
    <name evidence="15" type="ORF">T2O9.170</name>
</gene>
<comment type="function">
    <text evidence="1 4 6">Microtubule-associated force-producing protein that is targeted to the tubulo-vesicular network of the forming cell plate during cytokinesis. Also plays a major role in plasma membrane maintenance and cell wall integrity with an implication in vesicular trafficking, polar cell expansion, and other aspects of plant growth and development. Has a GTPase activity (By similarity).</text>
</comment>
<comment type="catalytic activity">
    <reaction evidence="1">
        <text>GTP + H2O = GDP + phosphate + H(+)</text>
        <dbReference type="Rhea" id="RHEA:19669"/>
        <dbReference type="ChEBI" id="CHEBI:15377"/>
        <dbReference type="ChEBI" id="CHEBI:15378"/>
        <dbReference type="ChEBI" id="CHEBI:37565"/>
        <dbReference type="ChEBI" id="CHEBI:43474"/>
        <dbReference type="ChEBI" id="CHEBI:58189"/>
    </reaction>
</comment>
<comment type="subunit">
    <text evidence="6 7">Forms homodimer and may homooligomerize and heterooligomerize to form the phragmoplastin complex (PubMed:14750520). Binds to PHIP1 (PubMed:18621982).</text>
</comment>
<comment type="subcellular location">
    <subcellularLocation>
        <location>Cytoplasm</location>
    </subcellularLocation>
    <subcellularLocation>
        <location>Cytoplasm</location>
        <location>Cytoskeleton</location>
    </subcellularLocation>
    <subcellularLocation>
        <location>Cytoplasm</location>
        <location>Cytoskeleton</location>
        <location>Phragmoplast</location>
    </subcellularLocation>
    <text>Microtubule-associated and localized in the forming cell plate during cytokinesis.</text>
</comment>
<comment type="tissue specificity">
    <text evidence="5">Ubiquitous.</text>
</comment>
<comment type="similarity">
    <text evidence="3">Belongs to the TRAFAC class dynamin-like GTPase superfamily. Dynamin/Fzo/YdjA family.</text>
</comment>
<comment type="sequence caution" evidence="13">
    <conflict type="frameshift">
        <sequence resource="EMBL-CDS" id="AAF22292"/>
    </conflict>
</comment>
<comment type="sequence caution" evidence="13">
    <conflict type="erroneous initiation">
        <sequence resource="EMBL-CDS" id="AAL88715"/>
    </conflict>
    <text>Truncated N-terminus.</text>
</comment>
<comment type="sequence caution" evidence="13">
    <conflict type="erroneous initiation">
        <sequence resource="EMBL-CDS" id="CAB75934"/>
    </conflict>
    <text>Truncated N-terminus.</text>
</comment>
<accession>Q9FNX5</accession>
<accession>Q9M1C4</accession>
<accession>Q9SE82</accession>